<protein>
    <recommendedName>
        <fullName evidence="6">Monoacylglycerol lipase</fullName>
        <shortName>MAG lipase</shortName>
        <ecNumber evidence="4">3.1.1.23</ecNumber>
    </recommendedName>
</protein>
<organism>
    <name type="scientific">Saccharomyces cerevisiae (strain ATCC 204508 / S288c)</name>
    <name type="common">Baker's yeast</name>
    <dbReference type="NCBI Taxonomy" id="559292"/>
    <lineage>
        <taxon>Eukaryota</taxon>
        <taxon>Fungi</taxon>
        <taxon>Dikarya</taxon>
        <taxon>Ascomycota</taxon>
        <taxon>Saccharomycotina</taxon>
        <taxon>Saccharomycetes</taxon>
        <taxon>Saccharomycetales</taxon>
        <taxon>Saccharomycetaceae</taxon>
        <taxon>Saccharomyces</taxon>
    </lineage>
</organism>
<feature type="chain" id="PRO_0000212455" description="Monoacylglycerol lipase">
    <location>
        <begin position="1"/>
        <end position="449"/>
    </location>
</feature>
<feature type="domain" description="AB hydrolase-1" evidence="2">
    <location>
        <begin position="151"/>
        <end position="392"/>
    </location>
</feature>
<feature type="short sequence motif" description="GXSXG" evidence="1">
    <location>
        <begin position="230"/>
        <end position="234"/>
    </location>
</feature>
<feature type="active site" description="Nucleophile" evidence="1">
    <location>
        <position position="232"/>
    </location>
</feature>
<feature type="active site" description="Charge relay system" evidence="1">
    <location>
        <position position="364"/>
    </location>
</feature>
<feature type="active site" description="Charge relay system" evidence="1">
    <location>
        <position position="392"/>
    </location>
</feature>
<feature type="cross-link" description="Glycyl lysine isopeptide (Lys-Gly) (interchain with G-Cter in ubiquitin)" evidence="9">
    <location>
        <position position="82"/>
    </location>
</feature>
<feature type="mutagenesis site" description="Abolishes MAG lipase activity." evidence="4">
    <original>S</original>
    <variation>A</variation>
    <location>
        <position position="232"/>
    </location>
</feature>
<proteinExistence type="evidence at protein level"/>
<evidence type="ECO:0000250" key="1">
    <source>
        <dbReference type="UniProtKB" id="P28321"/>
    </source>
</evidence>
<evidence type="ECO:0000255" key="2"/>
<evidence type="ECO:0000269" key="3">
    <source>
    </source>
</evidence>
<evidence type="ECO:0000269" key="4">
    <source>
    </source>
</evidence>
<evidence type="ECO:0000269" key="5">
    <source>
    </source>
</evidence>
<evidence type="ECO:0000303" key="6">
    <source>
    </source>
</evidence>
<evidence type="ECO:0000305" key="7"/>
<evidence type="ECO:0000305" key="8">
    <source>
    </source>
</evidence>
<evidence type="ECO:0007744" key="9">
    <source>
    </source>
</evidence>
<reference key="1">
    <citation type="journal article" date="1997" name="Nature">
        <title>The nucleotide sequence of Saccharomyces cerevisiae chromosome XIII.</title>
        <authorList>
            <person name="Bowman S."/>
            <person name="Churcher C.M."/>
            <person name="Badcock K."/>
            <person name="Brown D."/>
            <person name="Chillingworth T."/>
            <person name="Connor R."/>
            <person name="Dedman K."/>
            <person name="Devlin K."/>
            <person name="Gentles S."/>
            <person name="Hamlin N."/>
            <person name="Hunt S."/>
            <person name="Jagels K."/>
            <person name="Lye G."/>
            <person name="Moule S."/>
            <person name="Odell C."/>
            <person name="Pearson D."/>
            <person name="Rajandream M.A."/>
            <person name="Rice P."/>
            <person name="Skelton J."/>
            <person name="Walsh S.V."/>
            <person name="Whitehead S."/>
            <person name="Barrell B.G."/>
        </authorList>
    </citation>
    <scope>NUCLEOTIDE SEQUENCE [LARGE SCALE GENOMIC DNA]</scope>
    <source>
        <strain>ATCC 204508 / S288c</strain>
    </source>
</reference>
<reference key="2">
    <citation type="journal article" date="2014" name="G3 (Bethesda)">
        <title>The reference genome sequence of Saccharomyces cerevisiae: Then and now.</title>
        <authorList>
            <person name="Engel S.R."/>
            <person name="Dietrich F.S."/>
            <person name="Fisk D.G."/>
            <person name="Binkley G."/>
            <person name="Balakrishnan R."/>
            <person name="Costanzo M.C."/>
            <person name="Dwight S.S."/>
            <person name="Hitz B.C."/>
            <person name="Karra K."/>
            <person name="Nash R.S."/>
            <person name="Weng S."/>
            <person name="Wong E.D."/>
            <person name="Lloyd P."/>
            <person name="Skrzypek M.S."/>
            <person name="Miyasato S.R."/>
            <person name="Simison M."/>
            <person name="Cherry J.M."/>
        </authorList>
    </citation>
    <scope>GENOME REANNOTATION</scope>
    <source>
        <strain>ATCC 204508 / S288c</strain>
    </source>
</reference>
<reference key="3">
    <citation type="journal article" date="2006" name="J. Biol. Chem.">
        <title>The Saccharomyces cerevisiae EHT1 and EEB1 genes encode novel enzymes with medium-chain fatty acid ethyl ester synthesis and hydrolysis capacity.</title>
        <authorList>
            <person name="Saerens S.M.G."/>
            <person name="Verstrepen K.J."/>
            <person name="Van Laere S.D."/>
            <person name="Voet A.R."/>
            <person name="Van Dijck P."/>
            <person name="Delvaux F.R."/>
            <person name="Thevelein J.M."/>
        </authorList>
    </citation>
    <scope>FUNCTION</scope>
</reference>
<reference key="4">
    <citation type="journal article" date="2012" name="Proteomics">
        <title>Sites of ubiquitin attachment in Saccharomyces cerevisiae.</title>
        <authorList>
            <person name="Starita L.M."/>
            <person name="Lo R.S."/>
            <person name="Eng J.K."/>
            <person name="von Haller P.D."/>
            <person name="Fields S."/>
        </authorList>
    </citation>
    <scope>UBIQUITINATION [LARGE SCALE ANALYSIS] AT LYS-82</scope>
    <scope>IDENTIFICATION BY MASS SPECTROMETRY [LARGE SCALE ANALYSIS]</scope>
</reference>
<reference key="5">
    <citation type="journal article" date="2016" name="FEBS Lett.">
        <title>MGL2/YMR210w encodes a monoacylglycerol lipase in Saccharomyces cerevisiae.</title>
        <authorList>
            <person name="Selvaraju K."/>
            <person name="Gowsalya R."/>
            <person name="Vijayakumar R."/>
            <person name="Nachiappan V."/>
        </authorList>
    </citation>
    <scope>FUNCTION</scope>
    <scope>CATALYTIC ACTIVITY</scope>
    <scope>BIOPHYSICOCHEMICAL PROPERTIES</scope>
    <scope>MUTAGENESIS OF SER-232</scope>
</reference>
<reference key="6">
    <citation type="journal article" date="2017" name="Bioinformation">
        <title>Ymr210wp leads to the accumulation of phospholipids and steryl esters in yeast.</title>
        <authorList>
            <person name="Manda N.K."/>
            <person name="Thunuguntla V.B.S.C."/>
            <person name="Bokka C."/>
            <person name="Singh B.J."/>
        </authorList>
    </citation>
    <scope>FUNCTION</scope>
    <scope>BIOPHYSICOCHEMICAL PROPERTIES</scope>
</reference>
<keyword id="KW-0378">Hydrolase</keyword>
<keyword id="KW-1017">Isopeptide bond</keyword>
<keyword id="KW-1185">Reference proteome</keyword>
<keyword id="KW-0719">Serine esterase</keyword>
<keyword id="KW-0832">Ubl conjugation</keyword>
<name>MGL2_YEAST</name>
<gene>
    <name evidence="6" type="primary">MGL2</name>
    <name type="ordered locus">YMR210W</name>
    <name type="ORF">YM8261.04</name>
</gene>
<accession>Q03649</accession>
<accession>D6W035</accession>
<comment type="function">
    <text evidence="3 4 5">Converts monoacylglycerides (MAG) to free fatty acids and glycerol. Has a preference for palmitoyl-MAG (PubMed:26991558). Does not play a significant role in ethyl ester biosynthesis (PubMed:16361250). Also possesses ester hydrolase and low but persistent TAG lipase activity (PubMed:29225428).</text>
</comment>
<comment type="catalytic activity">
    <reaction evidence="4">
        <text>Hydrolyzes glycerol monoesters of long-chain fatty acids.</text>
        <dbReference type="EC" id="3.1.1.23"/>
    </reaction>
</comment>
<comment type="catalytic activity">
    <reaction evidence="4">
        <text>1-hexadecanoylglycerol + H2O = glycerol + hexadecanoate + H(+)</text>
        <dbReference type="Rhea" id="RHEA:39959"/>
        <dbReference type="ChEBI" id="CHEBI:7896"/>
        <dbReference type="ChEBI" id="CHEBI:15377"/>
        <dbReference type="ChEBI" id="CHEBI:15378"/>
        <dbReference type="ChEBI" id="CHEBI:17754"/>
        <dbReference type="ChEBI" id="CHEBI:69081"/>
    </reaction>
    <physiologicalReaction direction="left-to-right" evidence="8">
        <dbReference type="Rhea" id="RHEA:39960"/>
    </physiologicalReaction>
</comment>
<comment type="catalytic activity">
    <reaction evidence="4">
        <text>1-octadecanoylglycerol + H2O = octadecanoate + glycerol + H(+)</text>
        <dbReference type="Rhea" id="RHEA:38363"/>
        <dbReference type="ChEBI" id="CHEBI:15377"/>
        <dbReference type="ChEBI" id="CHEBI:15378"/>
        <dbReference type="ChEBI" id="CHEBI:17754"/>
        <dbReference type="ChEBI" id="CHEBI:25629"/>
        <dbReference type="ChEBI" id="CHEBI:75555"/>
    </reaction>
    <physiologicalReaction direction="left-to-right" evidence="8">
        <dbReference type="Rhea" id="RHEA:38364"/>
    </physiologicalReaction>
</comment>
<comment type="catalytic activity">
    <reaction evidence="4">
        <text>1-(9Z-octadecenoyl)-glycerol + H2O = glycerol + (9Z)-octadecenoate + H(+)</text>
        <dbReference type="Rhea" id="RHEA:38487"/>
        <dbReference type="ChEBI" id="CHEBI:15377"/>
        <dbReference type="ChEBI" id="CHEBI:15378"/>
        <dbReference type="ChEBI" id="CHEBI:17754"/>
        <dbReference type="ChEBI" id="CHEBI:30823"/>
        <dbReference type="ChEBI" id="CHEBI:75342"/>
    </reaction>
    <physiologicalReaction direction="left-to-right" evidence="8">
        <dbReference type="Rhea" id="RHEA:38488"/>
    </physiologicalReaction>
</comment>
<comment type="biophysicochemical properties">
    <kinetics>
        <KM evidence="4">25.89 uM for palmitoyl-MAG</KM>
        <KM evidence="5">11.51 uM for p-nitrophenyl acetate</KM>
        <KM evidence="5">7.28 uM for p-nitrophenyl butyrate</KM>
        <KM evidence="5">13.19 uM for p-nitrophenyl palmitate</KM>
        <Vmax evidence="4">36.76 nmol/min/mg enzyme for MAG lipase activity</Vmax>
        <Vmax evidence="4">0.26 umol/min/mg enzyme towards p-nitrophenyl butyrate</Vmax>
        <Vmax evidence="4">0.18 umol/min/mg enzyme towards p-nitrophenyl acetate</Vmax>
        <Vmax evidence="4">0.33 umol/min/mg enzyme towards p-nitrophenyl palmitate</Vmax>
    </kinetics>
    <phDependence>
        <text evidence="4 5">Optimum pH is 7.0 for MAG lipase activity. Active over a broad pH range from pH 6 to pH 9 (PubMed:26991558). Optimum pH is 8.5 for p-nitrophenyl palmitate and pH 7.5 for both p-nitrophenyl acetate and p-nitrophenyl butyrate (PubMed:29225428).</text>
    </phDependence>
    <temperatureDependence>
        <text evidence="4 5">Optimum temperature is 30 degrees Celsius for MAG lipase activity (PubMed:26991558). Optimum temperature is 45 degrees Celsius for p-nitrophenyl palmitate and 30 degrees Celsius for both p-nitrophenyl acetate and p-nitrophenyl butyrate (PubMed:29225428).</text>
    </temperatureDependence>
</comment>
<comment type="similarity">
    <text evidence="7">Belongs to the AB hydrolase superfamily. AB hydrolase 4 family.</text>
</comment>
<sequence>MRLKELLPNFLIVHQEVPEDPIAFKSTDKRENENKEITIPELIDTKVPELADGATDTLYGLLVNGHLQTAYGSFRHFDNIYKVQYKRMIIKYPHGGEGTVDFAVNGRSTKRRKVEKEYVPTSQPVFNGNLKRRYSYYSPDDPKLNSDDAKPMLIILHGLTGGSRESYVRAIVHEITTKYDFEACVFNARGCCYSAITTPLLYNGGWTNDIRYCVNDLRKRFPNRKFYMMGFSLGASIMTNYLGEESDRTKIECAISVSNPFDLYNSAYFINSTPMGSRFYSPALGHNLLRMVRNHLSTLEENPDFKDVIEKHLKKIRTVRQFDNLLTGPMFGYKNAEEYYKNASSYKRIPGIRTPFIALHAQDDPIVGGDLPIDQIKSNPYTLLLETSTGGHVGWFKDRSGRRWYAEPLCRFLKIFHDEITVKGLKPDLENVQLPDPNCEPIATTFRAN</sequence>
<dbReference type="EC" id="3.1.1.23" evidence="4"/>
<dbReference type="EMBL" id="Z49809">
    <property type="protein sequence ID" value="CAA89925.1"/>
    <property type="molecule type" value="Genomic_DNA"/>
</dbReference>
<dbReference type="EMBL" id="BK006946">
    <property type="protein sequence ID" value="DAA10109.1"/>
    <property type="molecule type" value="Genomic_DNA"/>
</dbReference>
<dbReference type="PIR" id="S55092">
    <property type="entry name" value="S55092"/>
</dbReference>
<dbReference type="RefSeq" id="NP_013937.1">
    <property type="nucleotide sequence ID" value="NM_001182717.1"/>
</dbReference>
<dbReference type="BioGRID" id="35388">
    <property type="interactions" value="80"/>
</dbReference>
<dbReference type="DIP" id="DIP-1964N"/>
<dbReference type="FunCoup" id="Q03649">
    <property type="interactions" value="350"/>
</dbReference>
<dbReference type="IntAct" id="Q03649">
    <property type="interactions" value="4"/>
</dbReference>
<dbReference type="MINT" id="Q03649"/>
<dbReference type="STRING" id="4932.YMR210W"/>
<dbReference type="SwissLipids" id="SLP:000001904"/>
<dbReference type="ESTHER" id="yeast-ym60">
    <property type="family name" value="abh_upf0017"/>
</dbReference>
<dbReference type="iPTMnet" id="Q03649"/>
<dbReference type="PaxDb" id="4932-YMR210W"/>
<dbReference type="PeptideAtlas" id="Q03649"/>
<dbReference type="EnsemblFungi" id="YMR210W_mRNA">
    <property type="protein sequence ID" value="YMR210W"/>
    <property type="gene ID" value="YMR210W"/>
</dbReference>
<dbReference type="GeneID" id="855250"/>
<dbReference type="KEGG" id="sce:YMR210W"/>
<dbReference type="AGR" id="SGD:S000004823"/>
<dbReference type="SGD" id="S000004823">
    <property type="gene designation" value="MGL2"/>
</dbReference>
<dbReference type="VEuPathDB" id="FungiDB:YMR210W"/>
<dbReference type="eggNOG" id="KOG1838">
    <property type="taxonomic scope" value="Eukaryota"/>
</dbReference>
<dbReference type="GeneTree" id="ENSGT00950000182902"/>
<dbReference type="HOGENOM" id="CLU_032487_1_0_1"/>
<dbReference type="InParanoid" id="Q03649"/>
<dbReference type="OMA" id="HCTGEDV"/>
<dbReference type="OrthoDB" id="5954035at2759"/>
<dbReference type="BioCyc" id="MetaCyc:G3O-32893-MONOMER"/>
<dbReference type="BioCyc" id="YEAST:G3O-32893-MONOMER"/>
<dbReference type="Reactome" id="R-SCE-1483191">
    <property type="pathway name" value="Synthesis of PC"/>
</dbReference>
<dbReference type="BioGRID-ORCS" id="855250">
    <property type="hits" value="3 hits in 10 CRISPR screens"/>
</dbReference>
<dbReference type="PRO" id="PR:Q03649"/>
<dbReference type="Proteomes" id="UP000002311">
    <property type="component" value="Chromosome XIII"/>
</dbReference>
<dbReference type="RNAct" id="Q03649">
    <property type="molecule type" value="protein"/>
</dbReference>
<dbReference type="GO" id="GO:0008126">
    <property type="term" value="F:acetylesterase activity"/>
    <property type="evidence" value="ECO:0000318"/>
    <property type="project" value="GO_Central"/>
</dbReference>
<dbReference type="GO" id="GO:0016746">
    <property type="term" value="F:acyltransferase activity"/>
    <property type="evidence" value="ECO:0000250"/>
    <property type="project" value="SGD"/>
</dbReference>
<dbReference type="GO" id="GO:0047372">
    <property type="term" value="F:monoacylglycerol lipase activity"/>
    <property type="evidence" value="ECO:0000314"/>
    <property type="project" value="SGD"/>
</dbReference>
<dbReference type="GO" id="GO:0004806">
    <property type="term" value="F:triacylglycerol lipase activity"/>
    <property type="evidence" value="ECO:0000314"/>
    <property type="project" value="SGD"/>
</dbReference>
<dbReference type="GO" id="GO:0051792">
    <property type="term" value="P:medium-chain fatty acid biosynthetic process"/>
    <property type="evidence" value="ECO:0000316"/>
    <property type="project" value="SGD"/>
</dbReference>
<dbReference type="GO" id="GO:0051793">
    <property type="term" value="P:medium-chain fatty acid catabolic process"/>
    <property type="evidence" value="ECO:0000318"/>
    <property type="project" value="GO_Central"/>
</dbReference>
<dbReference type="GO" id="GO:0006641">
    <property type="term" value="P:triglyceride metabolic process"/>
    <property type="evidence" value="ECO:0000316"/>
    <property type="project" value="SGD"/>
</dbReference>
<dbReference type="FunFam" id="3.40.50.1820:FF:000290">
    <property type="entry name" value="Alpha/Beta hydrolase protein"/>
    <property type="match status" value="1"/>
</dbReference>
<dbReference type="Gene3D" id="3.40.50.1820">
    <property type="entry name" value="alpha/beta hydrolase"/>
    <property type="match status" value="1"/>
</dbReference>
<dbReference type="InterPro" id="IPR000073">
    <property type="entry name" value="AB_hydrolase_1"/>
</dbReference>
<dbReference type="InterPro" id="IPR000952">
    <property type="entry name" value="AB_hydrolase_4_CS"/>
</dbReference>
<dbReference type="InterPro" id="IPR050960">
    <property type="entry name" value="AB_hydrolase_4_sf"/>
</dbReference>
<dbReference type="InterPro" id="IPR029058">
    <property type="entry name" value="AB_hydrolase_fold"/>
</dbReference>
<dbReference type="InterPro" id="IPR012020">
    <property type="entry name" value="ABHD4"/>
</dbReference>
<dbReference type="PANTHER" id="PTHR10794">
    <property type="entry name" value="ABHYDROLASE DOMAIN-CONTAINING PROTEIN"/>
    <property type="match status" value="1"/>
</dbReference>
<dbReference type="PANTHER" id="PTHR10794:SF63">
    <property type="entry name" value="ALPHA_BETA HYDROLASE 1, ISOFORM A"/>
    <property type="match status" value="1"/>
</dbReference>
<dbReference type="Pfam" id="PF00561">
    <property type="entry name" value="Abhydrolase_1"/>
    <property type="match status" value="1"/>
</dbReference>
<dbReference type="PIRSF" id="PIRSF005211">
    <property type="entry name" value="Ab_hydro_YheT"/>
    <property type="match status" value="1"/>
</dbReference>
<dbReference type="SUPFAM" id="SSF53474">
    <property type="entry name" value="alpha/beta-Hydrolases"/>
    <property type="match status" value="1"/>
</dbReference>
<dbReference type="PROSITE" id="PS01133">
    <property type="entry name" value="UPF0017"/>
    <property type="match status" value="1"/>
</dbReference>